<accession>Q47SC4</accession>
<sequence>MSAITRDEVAHLARLARLALPEDELDQLAAQLDVIISAVAKVQEVAKGDIPPTSHALPLTNVYRPDEVKPGLTPDQALAEAPAVEDGRFRVPQILGEEG</sequence>
<keyword id="KW-0067">ATP-binding</keyword>
<keyword id="KW-0436">Ligase</keyword>
<keyword id="KW-0547">Nucleotide-binding</keyword>
<keyword id="KW-0648">Protein biosynthesis</keyword>
<name>GATC_THEFY</name>
<gene>
    <name evidence="1" type="primary">gatC</name>
    <name type="ordered locus">Tfu_0605</name>
</gene>
<proteinExistence type="inferred from homology"/>
<reference key="1">
    <citation type="journal article" date="2007" name="J. Bacteriol.">
        <title>Genome sequence and analysis of the soil cellulolytic actinomycete Thermobifida fusca YX.</title>
        <authorList>
            <person name="Lykidis A."/>
            <person name="Mavromatis K."/>
            <person name="Ivanova N."/>
            <person name="Anderson I."/>
            <person name="Land M."/>
            <person name="DiBartolo G."/>
            <person name="Martinez M."/>
            <person name="Lapidus A."/>
            <person name="Lucas S."/>
            <person name="Copeland A."/>
            <person name="Richardson P."/>
            <person name="Wilson D.B."/>
            <person name="Kyrpides N."/>
        </authorList>
    </citation>
    <scope>NUCLEOTIDE SEQUENCE [LARGE SCALE GENOMIC DNA]</scope>
    <source>
        <strain>YX</strain>
    </source>
</reference>
<organism>
    <name type="scientific">Thermobifida fusca (strain YX)</name>
    <dbReference type="NCBI Taxonomy" id="269800"/>
    <lineage>
        <taxon>Bacteria</taxon>
        <taxon>Bacillati</taxon>
        <taxon>Actinomycetota</taxon>
        <taxon>Actinomycetes</taxon>
        <taxon>Streptosporangiales</taxon>
        <taxon>Nocardiopsidaceae</taxon>
        <taxon>Thermobifida</taxon>
    </lineage>
</organism>
<evidence type="ECO:0000255" key="1">
    <source>
        <dbReference type="HAMAP-Rule" id="MF_00122"/>
    </source>
</evidence>
<protein>
    <recommendedName>
        <fullName evidence="1">Aspartyl/glutamyl-tRNA(Asn/Gln) amidotransferase subunit C</fullName>
        <shortName evidence="1">Asp/Glu-ADT subunit C</shortName>
        <ecNumber evidence="1">6.3.5.-</ecNumber>
    </recommendedName>
</protein>
<comment type="function">
    <text evidence="1">Allows the formation of correctly charged Asn-tRNA(Asn) or Gln-tRNA(Gln) through the transamidation of misacylated Asp-tRNA(Asn) or Glu-tRNA(Gln) in organisms which lack either or both of asparaginyl-tRNA or glutaminyl-tRNA synthetases. The reaction takes place in the presence of glutamine and ATP through an activated phospho-Asp-tRNA(Asn) or phospho-Glu-tRNA(Gln).</text>
</comment>
<comment type="catalytic activity">
    <reaction evidence="1">
        <text>L-glutamyl-tRNA(Gln) + L-glutamine + ATP + H2O = L-glutaminyl-tRNA(Gln) + L-glutamate + ADP + phosphate + H(+)</text>
        <dbReference type="Rhea" id="RHEA:17521"/>
        <dbReference type="Rhea" id="RHEA-COMP:9681"/>
        <dbReference type="Rhea" id="RHEA-COMP:9684"/>
        <dbReference type="ChEBI" id="CHEBI:15377"/>
        <dbReference type="ChEBI" id="CHEBI:15378"/>
        <dbReference type="ChEBI" id="CHEBI:29985"/>
        <dbReference type="ChEBI" id="CHEBI:30616"/>
        <dbReference type="ChEBI" id="CHEBI:43474"/>
        <dbReference type="ChEBI" id="CHEBI:58359"/>
        <dbReference type="ChEBI" id="CHEBI:78520"/>
        <dbReference type="ChEBI" id="CHEBI:78521"/>
        <dbReference type="ChEBI" id="CHEBI:456216"/>
    </reaction>
</comment>
<comment type="catalytic activity">
    <reaction evidence="1">
        <text>L-aspartyl-tRNA(Asn) + L-glutamine + ATP + H2O = L-asparaginyl-tRNA(Asn) + L-glutamate + ADP + phosphate + 2 H(+)</text>
        <dbReference type="Rhea" id="RHEA:14513"/>
        <dbReference type="Rhea" id="RHEA-COMP:9674"/>
        <dbReference type="Rhea" id="RHEA-COMP:9677"/>
        <dbReference type="ChEBI" id="CHEBI:15377"/>
        <dbReference type="ChEBI" id="CHEBI:15378"/>
        <dbReference type="ChEBI" id="CHEBI:29985"/>
        <dbReference type="ChEBI" id="CHEBI:30616"/>
        <dbReference type="ChEBI" id="CHEBI:43474"/>
        <dbReference type="ChEBI" id="CHEBI:58359"/>
        <dbReference type="ChEBI" id="CHEBI:78515"/>
        <dbReference type="ChEBI" id="CHEBI:78516"/>
        <dbReference type="ChEBI" id="CHEBI:456216"/>
    </reaction>
</comment>
<comment type="subunit">
    <text evidence="1">Heterotrimer of A, B and C subunits.</text>
</comment>
<comment type="similarity">
    <text evidence="1">Belongs to the GatC family.</text>
</comment>
<dbReference type="EC" id="6.3.5.-" evidence="1"/>
<dbReference type="EMBL" id="CP000088">
    <property type="protein sequence ID" value="AAZ54643.1"/>
    <property type="molecule type" value="Genomic_DNA"/>
</dbReference>
<dbReference type="RefSeq" id="WP_011291052.1">
    <property type="nucleotide sequence ID" value="NC_007333.1"/>
</dbReference>
<dbReference type="SMR" id="Q47SC4"/>
<dbReference type="STRING" id="269800.Tfu_0605"/>
<dbReference type="KEGG" id="tfu:Tfu_0605"/>
<dbReference type="eggNOG" id="COG0721">
    <property type="taxonomic scope" value="Bacteria"/>
</dbReference>
<dbReference type="HOGENOM" id="CLU_105899_1_0_11"/>
<dbReference type="OrthoDB" id="5295223at2"/>
<dbReference type="GO" id="GO:0050566">
    <property type="term" value="F:asparaginyl-tRNA synthase (glutamine-hydrolyzing) activity"/>
    <property type="evidence" value="ECO:0007669"/>
    <property type="project" value="RHEA"/>
</dbReference>
<dbReference type="GO" id="GO:0005524">
    <property type="term" value="F:ATP binding"/>
    <property type="evidence" value="ECO:0007669"/>
    <property type="project" value="UniProtKB-KW"/>
</dbReference>
<dbReference type="GO" id="GO:0050567">
    <property type="term" value="F:glutaminyl-tRNA synthase (glutamine-hydrolyzing) activity"/>
    <property type="evidence" value="ECO:0007669"/>
    <property type="project" value="UniProtKB-UniRule"/>
</dbReference>
<dbReference type="GO" id="GO:0070681">
    <property type="term" value="P:glutaminyl-tRNAGln biosynthesis via transamidation"/>
    <property type="evidence" value="ECO:0007669"/>
    <property type="project" value="TreeGrafter"/>
</dbReference>
<dbReference type="GO" id="GO:0006450">
    <property type="term" value="P:regulation of translational fidelity"/>
    <property type="evidence" value="ECO:0007669"/>
    <property type="project" value="InterPro"/>
</dbReference>
<dbReference type="GO" id="GO:0006412">
    <property type="term" value="P:translation"/>
    <property type="evidence" value="ECO:0007669"/>
    <property type="project" value="UniProtKB-UniRule"/>
</dbReference>
<dbReference type="Gene3D" id="1.10.20.60">
    <property type="entry name" value="Glu-tRNAGln amidotransferase C subunit, N-terminal domain"/>
    <property type="match status" value="1"/>
</dbReference>
<dbReference type="HAMAP" id="MF_00122">
    <property type="entry name" value="GatC"/>
    <property type="match status" value="1"/>
</dbReference>
<dbReference type="InterPro" id="IPR036113">
    <property type="entry name" value="Asp/Glu-ADT_sf_sub_c"/>
</dbReference>
<dbReference type="InterPro" id="IPR003837">
    <property type="entry name" value="GatC"/>
</dbReference>
<dbReference type="NCBIfam" id="TIGR00135">
    <property type="entry name" value="gatC"/>
    <property type="match status" value="1"/>
</dbReference>
<dbReference type="PANTHER" id="PTHR15004">
    <property type="entry name" value="GLUTAMYL-TRNA(GLN) AMIDOTRANSFERASE SUBUNIT C, MITOCHONDRIAL"/>
    <property type="match status" value="1"/>
</dbReference>
<dbReference type="PANTHER" id="PTHR15004:SF0">
    <property type="entry name" value="GLUTAMYL-TRNA(GLN) AMIDOTRANSFERASE SUBUNIT C, MITOCHONDRIAL"/>
    <property type="match status" value="1"/>
</dbReference>
<dbReference type="Pfam" id="PF02686">
    <property type="entry name" value="GatC"/>
    <property type="match status" value="1"/>
</dbReference>
<dbReference type="SUPFAM" id="SSF141000">
    <property type="entry name" value="Glu-tRNAGln amidotransferase C subunit"/>
    <property type="match status" value="1"/>
</dbReference>
<feature type="chain" id="PRO_1000016236" description="Aspartyl/glutamyl-tRNA(Asn/Gln) amidotransferase subunit C">
    <location>
        <begin position="1"/>
        <end position="99"/>
    </location>
</feature>